<sequence>MKKHRRALALVSCLFLCSLVWLPSWRVCCKESSSASASSYYSQDDNCALENEDVQFQKKDEREGPINAESLGKSGSNLPISPKEHKLKDDSIVDVQNTESKKLSPPVVETLPTVDLHEESSNAVVDSETVENISSSSTSEITPISKLDEIEKSGTIPIAKPSETEQSETDCDVGEALDASAPIEQPSFVSPPDSLVGQHIENVSSSHGKGKITKSEFESKVSASEQGGGDPKSALNASDNLKNESSDYTKPGDIDPTSVASPKDPEDIPTFDEWKKKVMEVEKEKSQSMHASSNGGSHATKKVQKNRNNYASVECGAKILAANPEAKSTSAILIENMDLYMLNPCSTKIWFVIELCEPIQVKQLDIANYELFSSTPKDFLVSISDRYPTNKWIKLGTFHGRDERNVQSFPLDEQMYAKYVKMFIKYIKVELLSHFGSEHFCPLSLIRVFGTSMVEEYEEIADSQYHSERQELFDEDYDYPLDYNTGEDKSSKNLLGSATNAILNMVNIAANILGAKTEDLTEGNKSISENATATAAPKMPESTPVSTPVPSPEYVTTEVHTHDMEPSTPDTPKESPIVQLVQEEEEEASPSTVTLLGSGEQEDESSPWFESETQIFCSELTTICCISSFSEYIYKWCSVRVALYRQRSRTALSKGKDYLVLAQPPLLLPAESVDVSVLQPLSGELENTNIEREAETVVLGDLSSSMHQDDLVNHTVDAVELEPSHSQTLSQSLLLDITPEINPLPKIEVSESVEYEAGHIPSPVIPQESSVEIDNETEQKSESFSSIEKPSITYETNKVNELMDNIIKEDVNSMQIFTKLSETIVPPINTATVPDNEDGEAKMNIADTAKQTLISVVDSSSLPEVKEEEQSPEDALLRGLQRTATDFYAELQNSTDLGYANGNLVHGSNQKESVFMRLNNRIKALEVNMSLSGRYLEELSQRYRKQMEEMQKAFNKTIVKLQNTSRIAEEQDQRQTEAIQLLQAQLTNMTQLVSNLSATVAELKREVSDRQSYLVISLVLCVVLGLMLCMQRCRNTSQFDGDYISKLPKSNQYPSPKRCFSSYDDMNLKRRTSFPLMRSKSLQLTGKEVDPNDLYIVEPLKFSPEKKKKRCKYKIEKIETIKPEEPLHPIANGDIKGRKPFTNQRDFSNMGEVYHSSYKGPPSEGSSETSSQSEESYFCGISACTSLCNGQSQKTKTEKRALKRRRSKVQDQGKLIKTLIQTKSGSLPSLHDIIKGNKEITVGTFGVTAVSGHI</sequence>
<feature type="signal peptide" evidence="3">
    <location>
        <begin position="1"/>
        <end position="29"/>
    </location>
</feature>
<feature type="chain" id="PRO_5000065707" description="SUN domain-containing ossification factor">
    <location>
        <begin position="30"/>
        <end position="1254"/>
    </location>
</feature>
<feature type="transmembrane region" description="Helical" evidence="3">
    <location>
        <begin position="1011"/>
        <end position="1031"/>
    </location>
</feature>
<feature type="domain" description="SUN" evidence="4">
    <location>
        <begin position="284"/>
        <end position="453"/>
    </location>
</feature>
<feature type="region of interest" description="Disordered" evidence="5">
    <location>
        <begin position="58"/>
        <end position="88"/>
    </location>
</feature>
<feature type="region of interest" description="Disordered" evidence="5">
    <location>
        <begin position="118"/>
        <end position="270"/>
    </location>
</feature>
<feature type="region of interest" description="Disordered" evidence="5">
    <location>
        <begin position="282"/>
        <end position="304"/>
    </location>
</feature>
<feature type="region of interest" description="Disordered" evidence="5">
    <location>
        <begin position="530"/>
        <end position="553"/>
    </location>
</feature>
<feature type="region of interest" description="Disordered" evidence="5">
    <location>
        <begin position="583"/>
        <end position="605"/>
    </location>
</feature>
<feature type="region of interest" description="Disordered" evidence="5">
    <location>
        <begin position="759"/>
        <end position="788"/>
    </location>
</feature>
<feature type="region of interest" description="Disordered" evidence="5">
    <location>
        <begin position="1152"/>
        <end position="1172"/>
    </location>
</feature>
<feature type="coiled-coil region" evidence="3">
    <location>
        <begin position="909"/>
        <end position="1009"/>
    </location>
</feature>
<feature type="compositionally biased region" description="Low complexity" evidence="5">
    <location>
        <begin position="130"/>
        <end position="145"/>
    </location>
</feature>
<feature type="compositionally biased region" description="Acidic residues" evidence="5">
    <location>
        <begin position="165"/>
        <end position="175"/>
    </location>
</feature>
<feature type="compositionally biased region" description="Basic and acidic residues" evidence="5">
    <location>
        <begin position="241"/>
        <end position="253"/>
    </location>
</feature>
<feature type="compositionally biased region" description="Polar residues" evidence="5">
    <location>
        <begin position="288"/>
        <end position="297"/>
    </location>
</feature>
<feature type="compositionally biased region" description="Low complexity" evidence="5">
    <location>
        <begin position="540"/>
        <end position="553"/>
    </location>
</feature>
<feature type="compositionally biased region" description="Low complexity" evidence="5">
    <location>
        <begin position="1163"/>
        <end position="1172"/>
    </location>
</feature>
<feature type="modified residue" description="Phosphoserine" evidence="10">
    <location>
        <position position="1081"/>
    </location>
</feature>
<feature type="glycosylation site" description="N-linked (GlcNAc...) asparagine" evidence="3">
    <location>
        <position position="202"/>
    </location>
</feature>
<feature type="glycosylation site" description="N-linked (GlcNAc...) asparagine" evidence="3">
    <location>
        <position position="236"/>
    </location>
</feature>
<feature type="glycosylation site" description="N-linked (GlcNAc...) asparagine" evidence="3">
    <location>
        <position position="524"/>
    </location>
</feature>
<feature type="glycosylation site" description="N-linked (GlcNAc...) asparagine" evidence="3">
    <location>
        <position position="928"/>
    </location>
</feature>
<feature type="glycosylation site" description="N-linked (GlcNAc...) asparagine" evidence="3">
    <location>
        <position position="955"/>
    </location>
</feature>
<feature type="splice variant" id="VSP_027921" description="In isoform 2." evidence="8">
    <original>M</original>
    <variation>MRGFLARPFLSTNQHLAQWGSPLPQGKGLVQLPSQHTRHSRPFHELCSKEENSATVPKLISLVVSSETIDFSNKTMDSRRDWEREKRILEGKLQLPKALARTQRARDEGRAWTSRWLQRRRSPESCEAPLSAPLWGPQRGLPGREPLRSRSASAIALRTIGHILALLLRLLHLGLGSGGCREDVPPSGRGKKEEKM</variation>
    <location>
        <position position="1"/>
    </location>
</feature>
<feature type="splice variant" id="VSP_027922" description="In isoform 2." evidence="8">
    <location>
        <begin position="60"/>
        <end position="96"/>
    </location>
</feature>
<feature type="splice variant" id="VSP_027923" description="In isoform 2." evidence="8">
    <location>
        <begin position="421"/>
        <end position="427"/>
    </location>
</feature>
<feature type="sequence conflict" description="In Ref. 2; AAF04619." evidence="9" ref="2">
    <original>S</original>
    <variation>N</variation>
    <location>
        <position position="452"/>
    </location>
</feature>
<feature type="sequence conflict" description="In Ref. 2; AAF04619." evidence="9" ref="2">
    <original>V</original>
    <variation>M</variation>
    <location>
        <position position="811"/>
    </location>
</feature>
<organism>
    <name type="scientific">Homo sapiens</name>
    <name type="common">Human</name>
    <dbReference type="NCBI Taxonomy" id="9606"/>
    <lineage>
        <taxon>Eukaryota</taxon>
        <taxon>Metazoa</taxon>
        <taxon>Chordata</taxon>
        <taxon>Craniata</taxon>
        <taxon>Vertebrata</taxon>
        <taxon>Euteleostomi</taxon>
        <taxon>Mammalia</taxon>
        <taxon>Eutheria</taxon>
        <taxon>Euarchontoglires</taxon>
        <taxon>Primates</taxon>
        <taxon>Haplorrhini</taxon>
        <taxon>Catarrhini</taxon>
        <taxon>Hominidae</taxon>
        <taxon>Homo</taxon>
    </lineage>
</organism>
<comment type="function">
    <text evidence="1">Required for bone modeling during late embryogenesis. Regulates type I collagen synthesis in osteoblasts during their postnatal maturation (By similarity).</text>
</comment>
<comment type="subcellular location">
    <subcellularLocation>
        <location evidence="1">Rough endoplasmic reticulum membrane</location>
        <topology evidence="1">Single-pass type I membrane protein</topology>
    </subcellularLocation>
</comment>
<comment type="alternative products">
    <event type="alternative splicing"/>
    <isoform>
        <id>Q9UBS9-1</id>
        <name>1</name>
        <sequence type="displayed"/>
    </isoform>
    <isoform>
        <id>Q9UBS9-2</id>
        <name>2</name>
        <sequence type="described" ref="VSP_027921 VSP_027922 VSP_027923"/>
    </isoform>
</comment>
<comment type="tissue specificity">
    <text evidence="6">Highly expressed in pancreas and testis and to a lower extent in prostate, ovary, heart, thymus, small intestine and spleen.</text>
</comment>
<comment type="PTM">
    <text evidence="7">O-glycosylated. O-mannosylated by POMT1 and POMT2 and elongated by POMGNT1.</text>
</comment>
<comment type="PTM">
    <text evidence="2">N-glycosylated.</text>
</comment>
<protein>
    <recommendedName>
        <fullName>SUN domain-containing ossification factor</fullName>
    </recommendedName>
    <alternativeName>
        <fullName>Membrane protein CH1</fullName>
    </alternativeName>
    <alternativeName>
        <fullName>Protein osteopotentia homolog</fullName>
    </alternativeName>
    <alternativeName>
        <fullName>SUN-like protein 1</fullName>
    </alternativeName>
</protein>
<accession>Q9UBS9</accession>
<accession>B2RNU4</accession>
<accession>Q9BQB9</accession>
<accession>Q9BXQ2</accession>
<accession>Q9UL04</accession>
<reference key="1">
    <citation type="journal article" date="2000" name="Biochem. Biophys. Res. Commun.">
        <title>The C1orf9 gene encodes a putative transmembrane member of a novel protein family.</title>
        <authorList>
            <person name="Roesok O."/>
            <person name="Pedeutour F."/>
            <person name="Odeberg J."/>
            <person name="Lundeberg J."/>
            <person name="Aasheim H.-C."/>
        </authorList>
    </citation>
    <scope>NUCLEOTIDE SEQUENCE [MRNA] (ISOFORM 1)</scope>
    <scope>TISSUE SPECIFICITY</scope>
    <source>
        <tissue>Testis</tissue>
    </source>
</reference>
<reference key="2">
    <citation type="submission" date="1998-10" db="EMBL/GenBank/DDBJ databases">
        <title>Cloning of an overexpressed gene on chromosome 1 in breast cancer defines a new gene family.</title>
        <authorList>
            <person name="Chen L.-C."/>
            <person name="Cheung J."/>
            <person name="Moore D."/>
            <person name="Ljung B.-M."/>
            <person name="Kuo W.-L."/>
            <person name="Collins C."/>
            <person name="Gray J.W."/>
            <person name="Smith H.S."/>
        </authorList>
    </citation>
    <scope>NUCLEOTIDE SEQUENCE [MRNA] (ISOFORM 2)</scope>
    <source>
        <tissue>Mammary gland</tissue>
    </source>
</reference>
<reference key="3">
    <citation type="submission" date="1999-01" db="EMBL/GenBank/DDBJ databases">
        <authorList>
            <person name="Rhodes S."/>
        </authorList>
    </citation>
    <scope>NUCLEOTIDE SEQUENCE [LARGE SCALE MRNA] (ISOFORM 1)</scope>
</reference>
<reference key="4">
    <citation type="journal article" date="2006" name="Nature">
        <title>The DNA sequence and biological annotation of human chromosome 1.</title>
        <authorList>
            <person name="Gregory S.G."/>
            <person name="Barlow K.F."/>
            <person name="McLay K.E."/>
            <person name="Kaul R."/>
            <person name="Swarbreck D."/>
            <person name="Dunham A."/>
            <person name="Scott C.E."/>
            <person name="Howe K.L."/>
            <person name="Woodfine K."/>
            <person name="Spencer C.C.A."/>
            <person name="Jones M.C."/>
            <person name="Gillson C."/>
            <person name="Searle S."/>
            <person name="Zhou Y."/>
            <person name="Kokocinski F."/>
            <person name="McDonald L."/>
            <person name="Evans R."/>
            <person name="Phillips K."/>
            <person name="Atkinson A."/>
            <person name="Cooper R."/>
            <person name="Jones C."/>
            <person name="Hall R.E."/>
            <person name="Andrews T.D."/>
            <person name="Lloyd C."/>
            <person name="Ainscough R."/>
            <person name="Almeida J.P."/>
            <person name="Ambrose K.D."/>
            <person name="Anderson F."/>
            <person name="Andrew R.W."/>
            <person name="Ashwell R.I.S."/>
            <person name="Aubin K."/>
            <person name="Babbage A.K."/>
            <person name="Bagguley C.L."/>
            <person name="Bailey J."/>
            <person name="Beasley H."/>
            <person name="Bethel G."/>
            <person name="Bird C.P."/>
            <person name="Bray-Allen S."/>
            <person name="Brown J.Y."/>
            <person name="Brown A.J."/>
            <person name="Buckley D."/>
            <person name="Burton J."/>
            <person name="Bye J."/>
            <person name="Carder C."/>
            <person name="Chapman J.C."/>
            <person name="Clark S.Y."/>
            <person name="Clarke G."/>
            <person name="Clee C."/>
            <person name="Cobley V."/>
            <person name="Collier R.E."/>
            <person name="Corby N."/>
            <person name="Coville G.J."/>
            <person name="Davies J."/>
            <person name="Deadman R."/>
            <person name="Dunn M."/>
            <person name="Earthrowl M."/>
            <person name="Ellington A.G."/>
            <person name="Errington H."/>
            <person name="Frankish A."/>
            <person name="Frankland J."/>
            <person name="French L."/>
            <person name="Garner P."/>
            <person name="Garnett J."/>
            <person name="Gay L."/>
            <person name="Ghori M.R.J."/>
            <person name="Gibson R."/>
            <person name="Gilby L.M."/>
            <person name="Gillett W."/>
            <person name="Glithero R.J."/>
            <person name="Grafham D.V."/>
            <person name="Griffiths C."/>
            <person name="Griffiths-Jones S."/>
            <person name="Grocock R."/>
            <person name="Hammond S."/>
            <person name="Harrison E.S.I."/>
            <person name="Hart E."/>
            <person name="Haugen E."/>
            <person name="Heath P.D."/>
            <person name="Holmes S."/>
            <person name="Holt K."/>
            <person name="Howden P.J."/>
            <person name="Hunt A.R."/>
            <person name="Hunt S.E."/>
            <person name="Hunter G."/>
            <person name="Isherwood J."/>
            <person name="James R."/>
            <person name="Johnson C."/>
            <person name="Johnson D."/>
            <person name="Joy A."/>
            <person name="Kay M."/>
            <person name="Kershaw J.K."/>
            <person name="Kibukawa M."/>
            <person name="Kimberley A.M."/>
            <person name="King A."/>
            <person name="Knights A.J."/>
            <person name="Lad H."/>
            <person name="Laird G."/>
            <person name="Lawlor S."/>
            <person name="Leongamornlert D.A."/>
            <person name="Lloyd D.M."/>
            <person name="Loveland J."/>
            <person name="Lovell J."/>
            <person name="Lush M.J."/>
            <person name="Lyne R."/>
            <person name="Martin S."/>
            <person name="Mashreghi-Mohammadi M."/>
            <person name="Matthews L."/>
            <person name="Matthews N.S.W."/>
            <person name="McLaren S."/>
            <person name="Milne S."/>
            <person name="Mistry S."/>
            <person name="Moore M.J.F."/>
            <person name="Nickerson T."/>
            <person name="O'Dell C.N."/>
            <person name="Oliver K."/>
            <person name="Palmeiri A."/>
            <person name="Palmer S.A."/>
            <person name="Parker A."/>
            <person name="Patel D."/>
            <person name="Pearce A.V."/>
            <person name="Peck A.I."/>
            <person name="Pelan S."/>
            <person name="Phelps K."/>
            <person name="Phillimore B.J."/>
            <person name="Plumb R."/>
            <person name="Rajan J."/>
            <person name="Raymond C."/>
            <person name="Rouse G."/>
            <person name="Saenphimmachak C."/>
            <person name="Sehra H.K."/>
            <person name="Sheridan E."/>
            <person name="Shownkeen R."/>
            <person name="Sims S."/>
            <person name="Skuce C.D."/>
            <person name="Smith M."/>
            <person name="Steward C."/>
            <person name="Subramanian S."/>
            <person name="Sycamore N."/>
            <person name="Tracey A."/>
            <person name="Tromans A."/>
            <person name="Van Helmond Z."/>
            <person name="Wall M."/>
            <person name="Wallis J.M."/>
            <person name="White S."/>
            <person name="Whitehead S.L."/>
            <person name="Wilkinson J.E."/>
            <person name="Willey D.L."/>
            <person name="Williams H."/>
            <person name="Wilming L."/>
            <person name="Wray P.W."/>
            <person name="Wu Z."/>
            <person name="Coulson A."/>
            <person name="Vaudin M."/>
            <person name="Sulston J.E."/>
            <person name="Durbin R.M."/>
            <person name="Hubbard T."/>
            <person name="Wooster R."/>
            <person name="Dunham I."/>
            <person name="Carter N.P."/>
            <person name="McVean G."/>
            <person name="Ross M.T."/>
            <person name="Harrow J."/>
            <person name="Olson M.V."/>
            <person name="Beck S."/>
            <person name="Rogers J."/>
            <person name="Bentley D.R."/>
        </authorList>
    </citation>
    <scope>NUCLEOTIDE SEQUENCE [LARGE SCALE GENOMIC DNA]</scope>
</reference>
<reference key="5">
    <citation type="submission" date="2005-07" db="EMBL/GenBank/DDBJ databases">
        <authorList>
            <person name="Mural R.J."/>
            <person name="Istrail S."/>
            <person name="Sutton G.G."/>
            <person name="Florea L."/>
            <person name="Halpern A.L."/>
            <person name="Mobarry C.M."/>
            <person name="Lippert R."/>
            <person name="Walenz B."/>
            <person name="Shatkay H."/>
            <person name="Dew I."/>
            <person name="Miller J.R."/>
            <person name="Flanigan M.J."/>
            <person name="Edwards N.J."/>
            <person name="Bolanos R."/>
            <person name="Fasulo D."/>
            <person name="Halldorsson B.V."/>
            <person name="Hannenhalli S."/>
            <person name="Turner R."/>
            <person name="Yooseph S."/>
            <person name="Lu F."/>
            <person name="Nusskern D.R."/>
            <person name="Shue B.C."/>
            <person name="Zheng X.H."/>
            <person name="Zhong F."/>
            <person name="Delcher A.L."/>
            <person name="Huson D.H."/>
            <person name="Kravitz S.A."/>
            <person name="Mouchard L."/>
            <person name="Reinert K."/>
            <person name="Remington K.A."/>
            <person name="Clark A.G."/>
            <person name="Waterman M.S."/>
            <person name="Eichler E.E."/>
            <person name="Adams M.D."/>
            <person name="Hunkapiller M.W."/>
            <person name="Myers E.W."/>
            <person name="Venter J.C."/>
        </authorList>
    </citation>
    <scope>NUCLEOTIDE SEQUENCE [LARGE SCALE GENOMIC DNA]</scope>
</reference>
<reference key="6">
    <citation type="journal article" date="2004" name="Genome Res.">
        <title>The status, quality, and expansion of the NIH full-length cDNA project: the Mammalian Gene Collection (MGC).</title>
        <authorList>
            <consortium name="The MGC Project Team"/>
        </authorList>
    </citation>
    <scope>NUCLEOTIDE SEQUENCE [LARGE SCALE MRNA] (ISOFORM 1)</scope>
    <source>
        <tissue>Brain</tissue>
    </source>
</reference>
<reference key="7">
    <citation type="journal article" date="2001" name="Mol. Biol. Evol.">
        <title>Global patterns of human DNA sequence variation in a 10-kb region on chromosome 1.</title>
        <authorList>
            <person name="Yu N."/>
            <person name="Zhao Z."/>
            <person name="Fu Y.-X."/>
            <person name="Sambuughin N."/>
            <person name="Ramsay M."/>
            <person name="Jenkins T."/>
            <person name="Leskinen E."/>
            <person name="Patthy L."/>
            <person name="Jorde L.B."/>
            <person name="Kuromori T."/>
            <person name="Li W.-H."/>
        </authorList>
    </citation>
    <scope>NUCLEOTIDE SEQUENCE [GENOMIC DNA] OF 22-244</scope>
</reference>
<reference key="8">
    <citation type="journal article" date="2008" name="Proc. Natl. Acad. Sci. U.S.A.">
        <title>A quantitative atlas of mitotic phosphorylation.</title>
        <authorList>
            <person name="Dephoure N."/>
            <person name="Zhou C."/>
            <person name="Villen J."/>
            <person name="Beausoleil S.A."/>
            <person name="Bakalarski C.E."/>
            <person name="Elledge S.J."/>
            <person name="Gygi S.P."/>
        </authorList>
    </citation>
    <scope>IDENTIFICATION BY MASS SPECTROMETRY [LARGE SCALE ANALYSIS]</scope>
    <source>
        <tissue>Cervix carcinoma</tissue>
    </source>
</reference>
<reference key="9">
    <citation type="journal article" date="2013" name="J. Proteome Res.">
        <title>Toward a comprehensive characterization of a human cancer cell phosphoproteome.</title>
        <authorList>
            <person name="Zhou H."/>
            <person name="Di Palma S."/>
            <person name="Preisinger C."/>
            <person name="Peng M."/>
            <person name="Polat A.N."/>
            <person name="Heck A.J."/>
            <person name="Mohammed S."/>
        </authorList>
    </citation>
    <scope>PHOSPHORYLATION [LARGE SCALE ANALYSIS] AT SER-1081</scope>
    <scope>IDENTIFICATION BY MASS SPECTROMETRY [LARGE SCALE ANALYSIS]</scope>
    <source>
        <tissue>Erythroleukemia</tissue>
    </source>
</reference>
<reference key="10">
    <citation type="journal article" date="2017" name="J. Biol. Chem.">
        <title>Mammalian O-mannosylation of cadherins and plexins is independent of protein O-mannosyltransferases 1 and 2.</title>
        <authorList>
            <person name="Larsen I.S.B."/>
            <person name="Narimatsu Y."/>
            <person name="Joshi H.J."/>
            <person name="Yang Z."/>
            <person name="Harrison O.J."/>
            <person name="Brasch J."/>
            <person name="Shapiro L."/>
            <person name="Honig B."/>
            <person name="Vakhrushev S.Y."/>
            <person name="Clausen H."/>
            <person name="Halim A."/>
        </authorList>
    </citation>
    <scope>GLYCOSYLATION</scope>
</reference>
<name>SUCO_HUMAN</name>
<proteinExistence type="evidence at protein level"/>
<dbReference type="EMBL" id="AJ250075">
    <property type="protein sequence ID" value="CAB57360.1"/>
    <property type="molecule type" value="mRNA"/>
</dbReference>
<dbReference type="EMBL" id="AF097535">
    <property type="protein sequence ID" value="AAF04619.1"/>
    <property type="molecule type" value="mRNA"/>
</dbReference>
<dbReference type="EMBL" id="AL035291">
    <property type="protein sequence ID" value="CAA22894.1"/>
    <property type="molecule type" value="mRNA"/>
</dbReference>
<dbReference type="EMBL" id="Z96050">
    <property type="status" value="NOT_ANNOTATED_CDS"/>
    <property type="molecule type" value="Genomic_DNA"/>
</dbReference>
<dbReference type="EMBL" id="Z94054">
    <property type="status" value="NOT_ANNOTATED_CDS"/>
    <property type="molecule type" value="Genomic_DNA"/>
</dbReference>
<dbReference type="EMBL" id="BC137125">
    <property type="protein sequence ID" value="AAI37126.1"/>
    <property type="molecule type" value="mRNA"/>
</dbReference>
<dbReference type="EMBL" id="CH471067">
    <property type="protein sequence ID" value="EAW90931.1"/>
    <property type="molecule type" value="Genomic_DNA"/>
</dbReference>
<dbReference type="EMBL" id="AF310265">
    <property type="protein sequence ID" value="AAK28742.1"/>
    <property type="molecule type" value="Genomic_DNA"/>
</dbReference>
<dbReference type="EMBL" id="AF310266">
    <property type="protein sequence ID" value="AAK28743.1"/>
    <property type="molecule type" value="Genomic_DNA"/>
</dbReference>
<dbReference type="EMBL" id="AF310267">
    <property type="protein sequence ID" value="AAK28744.1"/>
    <property type="molecule type" value="Genomic_DNA"/>
</dbReference>
<dbReference type="EMBL" id="AF310268">
    <property type="protein sequence ID" value="AAK28745.1"/>
    <property type="molecule type" value="Genomic_DNA"/>
</dbReference>
<dbReference type="EMBL" id="AF310269">
    <property type="protein sequence ID" value="AAK28746.1"/>
    <property type="molecule type" value="Genomic_DNA"/>
</dbReference>
<dbReference type="EMBL" id="AF310270">
    <property type="protein sequence ID" value="AAK28747.1"/>
    <property type="molecule type" value="Genomic_DNA"/>
</dbReference>
<dbReference type="EMBL" id="AF310271">
    <property type="protein sequence ID" value="AAK28748.1"/>
    <property type="molecule type" value="Genomic_DNA"/>
</dbReference>
<dbReference type="EMBL" id="AF310272">
    <property type="protein sequence ID" value="AAK28749.1"/>
    <property type="molecule type" value="Genomic_DNA"/>
</dbReference>
<dbReference type="EMBL" id="AF310273">
    <property type="protein sequence ID" value="AAK28750.1"/>
    <property type="molecule type" value="Genomic_DNA"/>
</dbReference>
<dbReference type="EMBL" id="AF310274">
    <property type="protein sequence ID" value="AAK28751.1"/>
    <property type="molecule type" value="Genomic_DNA"/>
</dbReference>
<dbReference type="EMBL" id="AF310275">
    <property type="protein sequence ID" value="AAK28752.1"/>
    <property type="molecule type" value="Genomic_DNA"/>
</dbReference>
<dbReference type="EMBL" id="AF310276">
    <property type="protein sequence ID" value="AAK28753.1"/>
    <property type="molecule type" value="Genomic_DNA"/>
</dbReference>
<dbReference type="EMBL" id="AF310277">
    <property type="protein sequence ID" value="AAK28754.1"/>
    <property type="molecule type" value="Genomic_DNA"/>
</dbReference>
<dbReference type="EMBL" id="AF310278">
    <property type="protein sequence ID" value="AAK28755.1"/>
    <property type="molecule type" value="Genomic_DNA"/>
</dbReference>
<dbReference type="EMBL" id="AF310279">
    <property type="protein sequence ID" value="AAK28756.1"/>
    <property type="molecule type" value="Genomic_DNA"/>
</dbReference>
<dbReference type="EMBL" id="AF310280">
    <property type="protein sequence ID" value="AAK28757.1"/>
    <property type="molecule type" value="Genomic_DNA"/>
</dbReference>
<dbReference type="EMBL" id="AF310281">
    <property type="protein sequence ID" value="AAK28758.1"/>
    <property type="molecule type" value="Genomic_DNA"/>
</dbReference>
<dbReference type="EMBL" id="AF310282">
    <property type="protein sequence ID" value="AAK28759.1"/>
    <property type="molecule type" value="Genomic_DNA"/>
</dbReference>
<dbReference type="EMBL" id="AF310283">
    <property type="protein sequence ID" value="AAK28760.1"/>
    <property type="molecule type" value="Genomic_DNA"/>
</dbReference>
<dbReference type="EMBL" id="AF310284">
    <property type="protein sequence ID" value="AAK28761.1"/>
    <property type="molecule type" value="Genomic_DNA"/>
</dbReference>
<dbReference type="EMBL" id="AF310285">
    <property type="protein sequence ID" value="AAK28762.1"/>
    <property type="molecule type" value="Genomic_DNA"/>
</dbReference>
<dbReference type="EMBL" id="AF310286">
    <property type="protein sequence ID" value="AAK28763.1"/>
    <property type="molecule type" value="Genomic_DNA"/>
</dbReference>
<dbReference type="EMBL" id="AF310287">
    <property type="protein sequence ID" value="AAK28764.1"/>
    <property type="molecule type" value="Genomic_DNA"/>
</dbReference>
<dbReference type="EMBL" id="AF310288">
    <property type="protein sequence ID" value="AAK28765.1"/>
    <property type="molecule type" value="Genomic_DNA"/>
</dbReference>
<dbReference type="EMBL" id="AF310289">
    <property type="protein sequence ID" value="AAK28766.1"/>
    <property type="molecule type" value="Genomic_DNA"/>
</dbReference>
<dbReference type="EMBL" id="AF310290">
    <property type="protein sequence ID" value="AAK28767.1"/>
    <property type="molecule type" value="Genomic_DNA"/>
</dbReference>
<dbReference type="EMBL" id="AF310291">
    <property type="protein sequence ID" value="AAK28768.1"/>
    <property type="molecule type" value="Genomic_DNA"/>
</dbReference>
<dbReference type="EMBL" id="AF310292">
    <property type="protein sequence ID" value="AAK28769.1"/>
    <property type="molecule type" value="Genomic_DNA"/>
</dbReference>
<dbReference type="EMBL" id="AF310293">
    <property type="protein sequence ID" value="AAK28770.1"/>
    <property type="molecule type" value="Genomic_DNA"/>
</dbReference>
<dbReference type="EMBL" id="AF310294">
    <property type="protein sequence ID" value="AAK28771.1"/>
    <property type="molecule type" value="Genomic_DNA"/>
</dbReference>
<dbReference type="EMBL" id="AF310295">
    <property type="protein sequence ID" value="AAK28772.1"/>
    <property type="molecule type" value="Genomic_DNA"/>
</dbReference>
<dbReference type="EMBL" id="AF310296">
    <property type="protein sequence ID" value="AAK28773.1"/>
    <property type="molecule type" value="Genomic_DNA"/>
</dbReference>
<dbReference type="EMBL" id="AF310297">
    <property type="protein sequence ID" value="AAK28774.1"/>
    <property type="molecule type" value="Genomic_DNA"/>
</dbReference>
<dbReference type="EMBL" id="AF310298">
    <property type="protein sequence ID" value="AAK28775.1"/>
    <property type="molecule type" value="Genomic_DNA"/>
</dbReference>
<dbReference type="EMBL" id="AF310299">
    <property type="protein sequence ID" value="AAK28776.1"/>
    <property type="molecule type" value="Genomic_DNA"/>
</dbReference>
<dbReference type="EMBL" id="AF310300">
    <property type="protein sequence ID" value="AAK28777.1"/>
    <property type="molecule type" value="Genomic_DNA"/>
</dbReference>
<dbReference type="EMBL" id="AF310301">
    <property type="protein sequence ID" value="AAK28778.1"/>
    <property type="molecule type" value="Genomic_DNA"/>
</dbReference>
<dbReference type="EMBL" id="AF310302">
    <property type="protein sequence ID" value="AAK28779.1"/>
    <property type="molecule type" value="Genomic_DNA"/>
</dbReference>
<dbReference type="EMBL" id="AF310303">
    <property type="protein sequence ID" value="AAK28780.1"/>
    <property type="molecule type" value="Genomic_DNA"/>
</dbReference>
<dbReference type="EMBL" id="AF310304">
    <property type="protein sequence ID" value="AAK28781.1"/>
    <property type="molecule type" value="Genomic_DNA"/>
</dbReference>
<dbReference type="EMBL" id="AF310305">
    <property type="protein sequence ID" value="AAK28782.1"/>
    <property type="molecule type" value="Genomic_DNA"/>
</dbReference>
<dbReference type="EMBL" id="AF310306">
    <property type="protein sequence ID" value="AAK28783.1"/>
    <property type="molecule type" value="Genomic_DNA"/>
</dbReference>
<dbReference type="EMBL" id="AF310307">
    <property type="protein sequence ID" value="AAK28784.1"/>
    <property type="molecule type" value="Genomic_DNA"/>
</dbReference>
<dbReference type="EMBL" id="AF310308">
    <property type="protein sequence ID" value="AAK28785.1"/>
    <property type="molecule type" value="Genomic_DNA"/>
</dbReference>
<dbReference type="EMBL" id="AF310309">
    <property type="protein sequence ID" value="AAK28786.1"/>
    <property type="molecule type" value="Genomic_DNA"/>
</dbReference>
<dbReference type="EMBL" id="AF310310">
    <property type="protein sequence ID" value="AAK28787.1"/>
    <property type="molecule type" value="Genomic_DNA"/>
</dbReference>
<dbReference type="EMBL" id="AF310311">
    <property type="protein sequence ID" value="AAK28788.1"/>
    <property type="molecule type" value="Genomic_DNA"/>
</dbReference>
<dbReference type="EMBL" id="AF310312">
    <property type="protein sequence ID" value="AAK28789.1"/>
    <property type="molecule type" value="Genomic_DNA"/>
</dbReference>
<dbReference type="EMBL" id="AF310313">
    <property type="protein sequence ID" value="AAK28790.1"/>
    <property type="molecule type" value="Genomic_DNA"/>
</dbReference>
<dbReference type="EMBL" id="AF310314">
    <property type="protein sequence ID" value="AAK28791.1"/>
    <property type="molecule type" value="Genomic_DNA"/>
</dbReference>
<dbReference type="EMBL" id="AF310315">
    <property type="protein sequence ID" value="AAK28792.1"/>
    <property type="molecule type" value="Genomic_DNA"/>
</dbReference>
<dbReference type="EMBL" id="AF310316">
    <property type="protein sequence ID" value="AAK28793.1"/>
    <property type="molecule type" value="Genomic_DNA"/>
</dbReference>
<dbReference type="EMBL" id="AF310317">
    <property type="protein sequence ID" value="AAK28794.1"/>
    <property type="molecule type" value="Genomic_DNA"/>
</dbReference>
<dbReference type="EMBL" id="AF310318">
    <property type="protein sequence ID" value="AAK28795.1"/>
    <property type="molecule type" value="Genomic_DNA"/>
</dbReference>
<dbReference type="EMBL" id="AF310319">
    <property type="protein sequence ID" value="AAK28796.1"/>
    <property type="molecule type" value="Genomic_DNA"/>
</dbReference>
<dbReference type="EMBL" id="AF310320">
    <property type="protein sequence ID" value="AAK28797.1"/>
    <property type="molecule type" value="Genomic_DNA"/>
</dbReference>
<dbReference type="EMBL" id="AF310321">
    <property type="protein sequence ID" value="AAK28798.1"/>
    <property type="molecule type" value="Genomic_DNA"/>
</dbReference>
<dbReference type="EMBL" id="AF310322">
    <property type="protein sequence ID" value="AAK28799.1"/>
    <property type="molecule type" value="Genomic_DNA"/>
</dbReference>
<dbReference type="EMBL" id="AF310323">
    <property type="protein sequence ID" value="AAK28800.1"/>
    <property type="molecule type" value="Genomic_DNA"/>
</dbReference>
<dbReference type="EMBL" id="AF310324">
    <property type="protein sequence ID" value="AAK28801.1"/>
    <property type="molecule type" value="Genomic_DNA"/>
</dbReference>
<dbReference type="EMBL" id="AF310325">
    <property type="protein sequence ID" value="AAK28802.1"/>
    <property type="molecule type" value="Genomic_DNA"/>
</dbReference>
<dbReference type="CCDS" id="CCDS1303.1">
    <molecule id="Q9UBS9-1"/>
</dbReference>
<dbReference type="CCDS" id="CCDS65726.1">
    <molecule id="Q9UBS9-2"/>
</dbReference>
<dbReference type="PIR" id="JC7185">
    <property type="entry name" value="JC7185"/>
</dbReference>
<dbReference type="RefSeq" id="NP_001269679.1">
    <property type="nucleotide sequence ID" value="NM_001282750.1"/>
</dbReference>
<dbReference type="RefSeq" id="NP_001269680.1">
    <property type="nucleotide sequence ID" value="NM_001282751.1"/>
</dbReference>
<dbReference type="RefSeq" id="NP_055098.1">
    <molecule id="Q9UBS9-1"/>
    <property type="nucleotide sequence ID" value="NM_014283.5"/>
</dbReference>
<dbReference type="RefSeq" id="NP_057311.3">
    <molecule id="Q9UBS9-2"/>
    <property type="nucleotide sequence ID" value="NM_016227.4"/>
</dbReference>
<dbReference type="SMR" id="Q9UBS9"/>
<dbReference type="BioGRID" id="119536">
    <property type="interactions" value="65"/>
</dbReference>
<dbReference type="FunCoup" id="Q9UBS9">
    <property type="interactions" value="3029"/>
</dbReference>
<dbReference type="IntAct" id="Q9UBS9">
    <property type="interactions" value="32"/>
</dbReference>
<dbReference type="STRING" id="9606.ENSP00000356696"/>
<dbReference type="GlyConnect" id="1775">
    <property type="glycosylation" value="6 N-Linked glycans (5 sites)"/>
</dbReference>
<dbReference type="GlyCosmos" id="Q9UBS9">
    <property type="glycosylation" value="7 sites, 6 glycans"/>
</dbReference>
<dbReference type="GlyGen" id="Q9UBS9">
    <property type="glycosylation" value="15 sites, 13 N-linked glycans (8 sites), 2 O-linked glycans (6 sites)"/>
</dbReference>
<dbReference type="iPTMnet" id="Q9UBS9"/>
<dbReference type="PhosphoSitePlus" id="Q9UBS9"/>
<dbReference type="SwissPalm" id="Q9UBS9"/>
<dbReference type="BioMuta" id="SUCO"/>
<dbReference type="DMDM" id="74761893"/>
<dbReference type="jPOST" id="Q9UBS9"/>
<dbReference type="MassIVE" id="Q9UBS9"/>
<dbReference type="PaxDb" id="9606-ENSP00000356696"/>
<dbReference type="PeptideAtlas" id="Q9UBS9"/>
<dbReference type="ProteomicsDB" id="84053">
    <molecule id="Q9UBS9-1"/>
</dbReference>
<dbReference type="ProteomicsDB" id="84054">
    <molecule id="Q9UBS9-2"/>
</dbReference>
<dbReference type="Pumba" id="Q9UBS9"/>
<dbReference type="Antibodypedia" id="63320">
    <property type="antibodies" value="8 antibodies from 7 providers"/>
</dbReference>
<dbReference type="DNASU" id="51430"/>
<dbReference type="Ensembl" id="ENST00000263688.4">
    <molecule id="Q9UBS9-1"/>
    <property type="protein sequence ID" value="ENSP00000263688.3"/>
    <property type="gene ID" value="ENSG00000094975.15"/>
</dbReference>
<dbReference type="Ensembl" id="ENST00000367723.8">
    <molecule id="Q9UBS9-2"/>
    <property type="protein sequence ID" value="ENSP00000356696.4"/>
    <property type="gene ID" value="ENSG00000094975.15"/>
</dbReference>
<dbReference type="GeneID" id="51430"/>
<dbReference type="KEGG" id="hsa:51430"/>
<dbReference type="MANE-Select" id="ENST00000263688.4">
    <property type="protein sequence ID" value="ENSP00000263688.3"/>
    <property type="RefSeq nucleotide sequence ID" value="NM_014283.5"/>
    <property type="RefSeq protein sequence ID" value="NP_055098.1"/>
</dbReference>
<dbReference type="UCSC" id="uc001giq.6">
    <molecule id="Q9UBS9-1"/>
    <property type="organism name" value="human"/>
</dbReference>
<dbReference type="AGR" id="HGNC:1240"/>
<dbReference type="CTD" id="51430"/>
<dbReference type="DisGeNET" id="51430"/>
<dbReference type="GeneCards" id="SUCO"/>
<dbReference type="HGNC" id="HGNC:1240">
    <property type="gene designation" value="SUCO"/>
</dbReference>
<dbReference type="HPA" id="ENSG00000094975">
    <property type="expression patterns" value="Tissue enhanced (bone)"/>
</dbReference>
<dbReference type="MalaCards" id="SUCO"/>
<dbReference type="MIM" id="619434">
    <property type="type" value="gene"/>
</dbReference>
<dbReference type="neXtProt" id="NX_Q9UBS9"/>
<dbReference type="OpenTargets" id="ENSG00000094975"/>
<dbReference type="PharmGKB" id="PA25621"/>
<dbReference type="VEuPathDB" id="HostDB:ENSG00000094975"/>
<dbReference type="eggNOG" id="KOG1396">
    <property type="taxonomic scope" value="Eukaryota"/>
</dbReference>
<dbReference type="GeneTree" id="ENSGT00390000013502"/>
<dbReference type="HOGENOM" id="CLU_006401_0_0_1"/>
<dbReference type="InParanoid" id="Q9UBS9"/>
<dbReference type="OMA" id="WFELETQ"/>
<dbReference type="OrthoDB" id="266334at2759"/>
<dbReference type="PAN-GO" id="Q9UBS9">
    <property type="GO annotations" value="3 GO annotations based on evolutionary models"/>
</dbReference>
<dbReference type="PhylomeDB" id="Q9UBS9"/>
<dbReference type="TreeFam" id="TF105817"/>
<dbReference type="PathwayCommons" id="Q9UBS9"/>
<dbReference type="SignaLink" id="Q9UBS9"/>
<dbReference type="BioGRID-ORCS" id="51430">
    <property type="hits" value="118 hits in 1157 CRISPR screens"/>
</dbReference>
<dbReference type="ChiTaRS" id="SUCO">
    <property type="organism name" value="human"/>
</dbReference>
<dbReference type="GenomeRNAi" id="51430"/>
<dbReference type="Pharos" id="Q9UBS9">
    <property type="development level" value="Tdark"/>
</dbReference>
<dbReference type="PRO" id="PR:Q9UBS9"/>
<dbReference type="Proteomes" id="UP000005640">
    <property type="component" value="Chromosome 1"/>
</dbReference>
<dbReference type="RNAct" id="Q9UBS9">
    <property type="molecule type" value="protein"/>
</dbReference>
<dbReference type="Bgee" id="ENSG00000094975">
    <property type="expression patterns" value="Expressed in corpus epididymis and 212 other cell types or tissues"/>
</dbReference>
<dbReference type="ExpressionAtlas" id="Q9UBS9">
    <property type="expression patterns" value="baseline and differential"/>
</dbReference>
<dbReference type="GO" id="GO:0005737">
    <property type="term" value="C:cytoplasm"/>
    <property type="evidence" value="ECO:0000318"/>
    <property type="project" value="GO_Central"/>
</dbReference>
<dbReference type="GO" id="GO:0016020">
    <property type="term" value="C:membrane"/>
    <property type="evidence" value="ECO:0000250"/>
    <property type="project" value="UniProtKB"/>
</dbReference>
<dbReference type="GO" id="GO:0005791">
    <property type="term" value="C:rough endoplasmic reticulum"/>
    <property type="evidence" value="ECO:0000250"/>
    <property type="project" value="UniProtKB"/>
</dbReference>
<dbReference type="GO" id="GO:0030867">
    <property type="term" value="C:rough endoplasmic reticulum membrane"/>
    <property type="evidence" value="ECO:0007669"/>
    <property type="project" value="UniProtKB-SubCell"/>
</dbReference>
<dbReference type="GO" id="GO:0001503">
    <property type="term" value="P:ossification"/>
    <property type="evidence" value="ECO:0007669"/>
    <property type="project" value="UniProtKB-KW"/>
</dbReference>
<dbReference type="GO" id="GO:0032967">
    <property type="term" value="P:positive regulation of collagen biosynthetic process"/>
    <property type="evidence" value="ECO:0000250"/>
    <property type="project" value="UniProtKB"/>
</dbReference>
<dbReference type="GO" id="GO:0045669">
    <property type="term" value="P:positive regulation of osteoblast differentiation"/>
    <property type="evidence" value="ECO:0000250"/>
    <property type="project" value="UniProtKB"/>
</dbReference>
<dbReference type="GO" id="GO:0046850">
    <property type="term" value="P:regulation of bone remodeling"/>
    <property type="evidence" value="ECO:0000250"/>
    <property type="project" value="UniProtKB"/>
</dbReference>
<dbReference type="FunFam" id="2.60.120.260:FF:000024">
    <property type="entry name" value="SUN domain containing ossification factor"/>
    <property type="match status" value="1"/>
</dbReference>
<dbReference type="Gene3D" id="2.60.120.260">
    <property type="entry name" value="Galactose-binding domain-like"/>
    <property type="match status" value="1"/>
</dbReference>
<dbReference type="InterPro" id="IPR008979">
    <property type="entry name" value="Galactose-bd-like_sf"/>
</dbReference>
<dbReference type="InterPro" id="IPR045120">
    <property type="entry name" value="Suco/Slp1-like"/>
</dbReference>
<dbReference type="InterPro" id="IPR012919">
    <property type="entry name" value="SUN_dom"/>
</dbReference>
<dbReference type="PANTHER" id="PTHR12953">
    <property type="entry name" value="MEMBRANE PROTEIN CH1 RELATED"/>
    <property type="match status" value="1"/>
</dbReference>
<dbReference type="PANTHER" id="PTHR12953:SF0">
    <property type="entry name" value="SUN DOMAIN-CONTAINING OSSIFICATION FACTOR"/>
    <property type="match status" value="1"/>
</dbReference>
<dbReference type="Pfam" id="PF07738">
    <property type="entry name" value="Sad1_UNC"/>
    <property type="match status" value="1"/>
</dbReference>
<dbReference type="SUPFAM" id="SSF49785">
    <property type="entry name" value="Galactose-binding domain-like"/>
    <property type="match status" value="1"/>
</dbReference>
<dbReference type="PROSITE" id="PS51469">
    <property type="entry name" value="SUN"/>
    <property type="match status" value="1"/>
</dbReference>
<gene>
    <name type="primary">SUCO</name>
    <name type="synonym">C1orf9</name>
    <name type="synonym">CH1</name>
    <name type="synonym">OPT</name>
    <name type="synonym">SLP1</name>
</gene>
<evidence type="ECO:0000250" key="1"/>
<evidence type="ECO:0000250" key="2">
    <source>
        <dbReference type="UniProtKB" id="Q8C341"/>
    </source>
</evidence>
<evidence type="ECO:0000255" key="3"/>
<evidence type="ECO:0000255" key="4">
    <source>
        <dbReference type="PROSITE-ProRule" id="PRU00802"/>
    </source>
</evidence>
<evidence type="ECO:0000256" key="5">
    <source>
        <dbReference type="SAM" id="MobiDB-lite"/>
    </source>
</evidence>
<evidence type="ECO:0000269" key="6">
    <source>
    </source>
</evidence>
<evidence type="ECO:0000269" key="7">
    <source>
    </source>
</evidence>
<evidence type="ECO:0000303" key="8">
    <source ref="2"/>
</evidence>
<evidence type="ECO:0000305" key="9"/>
<evidence type="ECO:0007744" key="10">
    <source>
    </source>
</evidence>
<keyword id="KW-0025">Alternative splicing</keyword>
<keyword id="KW-0175">Coiled coil</keyword>
<keyword id="KW-0217">Developmental protein</keyword>
<keyword id="KW-0256">Endoplasmic reticulum</keyword>
<keyword id="KW-0325">Glycoprotein</keyword>
<keyword id="KW-0472">Membrane</keyword>
<keyword id="KW-0892">Osteogenesis</keyword>
<keyword id="KW-0597">Phosphoprotein</keyword>
<keyword id="KW-1267">Proteomics identification</keyword>
<keyword id="KW-1185">Reference proteome</keyword>
<keyword id="KW-0732">Signal</keyword>
<keyword id="KW-0812">Transmembrane</keyword>
<keyword id="KW-1133">Transmembrane helix</keyword>